<comment type="function">
    <text evidence="1">Catalyzes the reversible interconversion of serine and glycine with tetrahydrofolate (THF) serving as the one-carbon carrier. This reaction serves as the major source of one-carbon groups required for the biosynthesis of purines, thymidylate, methionine, and other important biomolecules. Also exhibits THF-independent aldolase activity toward beta-hydroxyamino acids, producing glycine and aldehydes, via a retro-aldol mechanism.</text>
</comment>
<comment type="catalytic activity">
    <reaction evidence="1">
        <text>(6R)-5,10-methylene-5,6,7,8-tetrahydrofolate + glycine + H2O = (6S)-5,6,7,8-tetrahydrofolate + L-serine</text>
        <dbReference type="Rhea" id="RHEA:15481"/>
        <dbReference type="ChEBI" id="CHEBI:15377"/>
        <dbReference type="ChEBI" id="CHEBI:15636"/>
        <dbReference type="ChEBI" id="CHEBI:33384"/>
        <dbReference type="ChEBI" id="CHEBI:57305"/>
        <dbReference type="ChEBI" id="CHEBI:57453"/>
        <dbReference type="EC" id="2.1.2.1"/>
    </reaction>
</comment>
<comment type="cofactor">
    <cofactor evidence="1">
        <name>pyridoxal 5'-phosphate</name>
        <dbReference type="ChEBI" id="CHEBI:597326"/>
    </cofactor>
</comment>
<comment type="pathway">
    <text evidence="1">One-carbon metabolism; tetrahydrofolate interconversion.</text>
</comment>
<comment type="pathway">
    <text evidence="1">Amino-acid biosynthesis; glycine biosynthesis; glycine from L-serine: step 1/1.</text>
</comment>
<comment type="subunit">
    <text evidence="1">Homodimer.</text>
</comment>
<comment type="subcellular location">
    <subcellularLocation>
        <location evidence="1">Cytoplasm</location>
    </subcellularLocation>
</comment>
<comment type="similarity">
    <text evidence="1">Belongs to the SHMT family.</text>
</comment>
<reference key="1">
    <citation type="journal article" date="2003" name="Science">
        <title>Role of mobile DNA in the evolution of vancomycin-resistant Enterococcus faecalis.</title>
        <authorList>
            <person name="Paulsen I.T."/>
            <person name="Banerjei L."/>
            <person name="Myers G.S.A."/>
            <person name="Nelson K.E."/>
            <person name="Seshadri R."/>
            <person name="Read T.D."/>
            <person name="Fouts D.E."/>
            <person name="Eisen J.A."/>
            <person name="Gill S.R."/>
            <person name="Heidelberg J.F."/>
            <person name="Tettelin H."/>
            <person name="Dodson R.J."/>
            <person name="Umayam L.A."/>
            <person name="Brinkac L.M."/>
            <person name="Beanan M.J."/>
            <person name="Daugherty S.C."/>
            <person name="DeBoy R.T."/>
            <person name="Durkin S.A."/>
            <person name="Kolonay J.F."/>
            <person name="Madupu R."/>
            <person name="Nelson W.C."/>
            <person name="Vamathevan J.J."/>
            <person name="Tran B."/>
            <person name="Upton J."/>
            <person name="Hansen T."/>
            <person name="Shetty J."/>
            <person name="Khouri H.M."/>
            <person name="Utterback T.R."/>
            <person name="Radune D."/>
            <person name="Ketchum K.A."/>
            <person name="Dougherty B.A."/>
            <person name="Fraser C.M."/>
        </authorList>
    </citation>
    <scope>NUCLEOTIDE SEQUENCE [LARGE SCALE GENOMIC DNA]</scope>
    <source>
        <strain>ATCC 700802 / V583</strain>
    </source>
</reference>
<protein>
    <recommendedName>
        <fullName evidence="1">Serine hydroxymethyltransferase</fullName>
        <shortName evidence="1">SHMT</shortName>
        <shortName evidence="1">Serine methylase</shortName>
        <ecNumber evidence="1">2.1.2.1</ecNumber>
    </recommendedName>
</protein>
<sequence>MDYKTYDPDLWNAIAREEERQENNLELIASENVVSKAVMAAQGSILTNKYAEGYPGKRYYGGCEFIDIVENLAIDRAKELFGAKFANVQAHSGSQANTAAYLSLVEPGDTILGMDLSAGGHLTHGSPVNFSGKTYNFVSYGVDPSTEVIDYDVVRILAREHRPKLIVAGASAYSRTIDFKRFREIADEVDAKLMVDMAHIAGLVASGLHPNPVPYADIVTSTTHKTLRGPRGGLILTNSEELAKKVNSSIFPGIQGGPLEHVIAGKAAAFKEALDPSFAEYSQQVIANAQAMTKVFNQAPEARLISGATDNHLLLIEVTGFGLNGKEAEAILDSVNITVNKNSIPFEQLSPFKTSGIRIGTPAITSRGFKEEDAVEVAKLIVQVLKDPENTAVHDEVKAAVAALTKKYPLYN</sequence>
<feature type="chain" id="PRO_0000113576" description="Serine hydroxymethyltransferase">
    <location>
        <begin position="1"/>
        <end position="412"/>
    </location>
</feature>
<feature type="binding site" evidence="1">
    <location>
        <position position="116"/>
    </location>
    <ligand>
        <name>(6S)-5,6,7,8-tetrahydrofolate</name>
        <dbReference type="ChEBI" id="CHEBI:57453"/>
    </ligand>
</feature>
<feature type="binding site" evidence="1">
    <location>
        <begin position="120"/>
        <end position="122"/>
    </location>
    <ligand>
        <name>(6S)-5,6,7,8-tetrahydrofolate</name>
        <dbReference type="ChEBI" id="CHEBI:57453"/>
    </ligand>
</feature>
<feature type="binding site" evidence="1">
    <location>
        <position position="241"/>
    </location>
    <ligand>
        <name>(6S)-5,6,7,8-tetrahydrofolate</name>
        <dbReference type="ChEBI" id="CHEBI:57453"/>
    </ligand>
</feature>
<feature type="binding site" evidence="1">
    <location>
        <begin position="350"/>
        <end position="352"/>
    </location>
    <ligand>
        <name>(6S)-5,6,7,8-tetrahydrofolate</name>
        <dbReference type="ChEBI" id="CHEBI:57453"/>
    </ligand>
</feature>
<feature type="site" description="Plays an important role in substrate specificity" evidence="1">
    <location>
        <position position="224"/>
    </location>
</feature>
<feature type="modified residue" description="N6-(pyridoxal phosphate)lysine" evidence="1">
    <location>
        <position position="225"/>
    </location>
</feature>
<dbReference type="EC" id="2.1.2.1" evidence="1"/>
<dbReference type="EMBL" id="AE016830">
    <property type="protein sequence ID" value="AAO82263.1"/>
    <property type="molecule type" value="Genomic_DNA"/>
</dbReference>
<dbReference type="RefSeq" id="NP_816193.1">
    <property type="nucleotide sequence ID" value="NC_004668.1"/>
</dbReference>
<dbReference type="RefSeq" id="WP_002356623.1">
    <property type="nucleotide sequence ID" value="NZ_KE136528.1"/>
</dbReference>
<dbReference type="SMR" id="Q831F9"/>
<dbReference type="STRING" id="226185.EF_2550"/>
<dbReference type="EnsemblBacteria" id="AAO82263">
    <property type="protein sequence ID" value="AAO82263"/>
    <property type="gene ID" value="EF_2550"/>
</dbReference>
<dbReference type="KEGG" id="efa:EF2550"/>
<dbReference type="PATRIC" id="fig|226185.45.peg.1000"/>
<dbReference type="eggNOG" id="COG0112">
    <property type="taxonomic scope" value="Bacteria"/>
</dbReference>
<dbReference type="HOGENOM" id="CLU_022477_2_1_9"/>
<dbReference type="UniPathway" id="UPA00193"/>
<dbReference type="UniPathway" id="UPA00288">
    <property type="reaction ID" value="UER01023"/>
</dbReference>
<dbReference type="Proteomes" id="UP000001415">
    <property type="component" value="Chromosome"/>
</dbReference>
<dbReference type="GO" id="GO:0005829">
    <property type="term" value="C:cytosol"/>
    <property type="evidence" value="ECO:0007669"/>
    <property type="project" value="TreeGrafter"/>
</dbReference>
<dbReference type="GO" id="GO:0004372">
    <property type="term" value="F:glycine hydroxymethyltransferase activity"/>
    <property type="evidence" value="ECO:0007669"/>
    <property type="project" value="UniProtKB-UniRule"/>
</dbReference>
<dbReference type="GO" id="GO:0030170">
    <property type="term" value="F:pyridoxal phosphate binding"/>
    <property type="evidence" value="ECO:0007669"/>
    <property type="project" value="UniProtKB-UniRule"/>
</dbReference>
<dbReference type="GO" id="GO:0019264">
    <property type="term" value="P:glycine biosynthetic process from serine"/>
    <property type="evidence" value="ECO:0007669"/>
    <property type="project" value="UniProtKB-UniRule"/>
</dbReference>
<dbReference type="GO" id="GO:0035999">
    <property type="term" value="P:tetrahydrofolate interconversion"/>
    <property type="evidence" value="ECO:0007669"/>
    <property type="project" value="UniProtKB-UniRule"/>
</dbReference>
<dbReference type="CDD" id="cd00378">
    <property type="entry name" value="SHMT"/>
    <property type="match status" value="1"/>
</dbReference>
<dbReference type="FunFam" id="3.40.640.10:FF:000001">
    <property type="entry name" value="Serine hydroxymethyltransferase"/>
    <property type="match status" value="1"/>
</dbReference>
<dbReference type="Gene3D" id="3.90.1150.10">
    <property type="entry name" value="Aspartate Aminotransferase, domain 1"/>
    <property type="match status" value="1"/>
</dbReference>
<dbReference type="Gene3D" id="3.40.640.10">
    <property type="entry name" value="Type I PLP-dependent aspartate aminotransferase-like (Major domain)"/>
    <property type="match status" value="1"/>
</dbReference>
<dbReference type="HAMAP" id="MF_00051">
    <property type="entry name" value="SHMT"/>
    <property type="match status" value="1"/>
</dbReference>
<dbReference type="InterPro" id="IPR015424">
    <property type="entry name" value="PyrdxlP-dep_Trfase"/>
</dbReference>
<dbReference type="InterPro" id="IPR015421">
    <property type="entry name" value="PyrdxlP-dep_Trfase_major"/>
</dbReference>
<dbReference type="InterPro" id="IPR015422">
    <property type="entry name" value="PyrdxlP-dep_Trfase_small"/>
</dbReference>
<dbReference type="InterPro" id="IPR001085">
    <property type="entry name" value="Ser_HO-MeTrfase"/>
</dbReference>
<dbReference type="InterPro" id="IPR049943">
    <property type="entry name" value="Ser_HO-MeTrfase-like"/>
</dbReference>
<dbReference type="InterPro" id="IPR019798">
    <property type="entry name" value="Ser_HO-MeTrfase_PLP_BS"/>
</dbReference>
<dbReference type="InterPro" id="IPR039429">
    <property type="entry name" value="SHMT-like_dom"/>
</dbReference>
<dbReference type="NCBIfam" id="NF000586">
    <property type="entry name" value="PRK00011.1"/>
    <property type="match status" value="1"/>
</dbReference>
<dbReference type="PANTHER" id="PTHR11680">
    <property type="entry name" value="SERINE HYDROXYMETHYLTRANSFERASE"/>
    <property type="match status" value="1"/>
</dbReference>
<dbReference type="PANTHER" id="PTHR11680:SF35">
    <property type="entry name" value="SERINE HYDROXYMETHYLTRANSFERASE 1"/>
    <property type="match status" value="1"/>
</dbReference>
<dbReference type="Pfam" id="PF00464">
    <property type="entry name" value="SHMT"/>
    <property type="match status" value="1"/>
</dbReference>
<dbReference type="PIRSF" id="PIRSF000412">
    <property type="entry name" value="SHMT"/>
    <property type="match status" value="1"/>
</dbReference>
<dbReference type="SUPFAM" id="SSF53383">
    <property type="entry name" value="PLP-dependent transferases"/>
    <property type="match status" value="1"/>
</dbReference>
<dbReference type="PROSITE" id="PS00096">
    <property type="entry name" value="SHMT"/>
    <property type="match status" value="1"/>
</dbReference>
<proteinExistence type="inferred from homology"/>
<name>GLYA_ENTFA</name>
<accession>Q831F9</accession>
<organism>
    <name type="scientific">Enterococcus faecalis (strain ATCC 700802 / V583)</name>
    <dbReference type="NCBI Taxonomy" id="226185"/>
    <lineage>
        <taxon>Bacteria</taxon>
        <taxon>Bacillati</taxon>
        <taxon>Bacillota</taxon>
        <taxon>Bacilli</taxon>
        <taxon>Lactobacillales</taxon>
        <taxon>Enterococcaceae</taxon>
        <taxon>Enterococcus</taxon>
    </lineage>
</organism>
<keyword id="KW-0028">Amino-acid biosynthesis</keyword>
<keyword id="KW-0963">Cytoplasm</keyword>
<keyword id="KW-0554">One-carbon metabolism</keyword>
<keyword id="KW-0663">Pyridoxal phosphate</keyword>
<keyword id="KW-1185">Reference proteome</keyword>
<keyword id="KW-0808">Transferase</keyword>
<evidence type="ECO:0000255" key="1">
    <source>
        <dbReference type="HAMAP-Rule" id="MF_00051"/>
    </source>
</evidence>
<gene>
    <name evidence="1" type="primary">glyA</name>
    <name type="ordered locus">EF_2550</name>
</gene>